<proteinExistence type="predicted"/>
<evidence type="ECO:0000255" key="1"/>
<evidence type="ECO:0000305" key="2"/>
<gene>
    <name type="primary">exoD</name>
    <name type="ordered locus">R00273</name>
    <name type="ORF">SMc00353</name>
</gene>
<comment type="function">
    <text>Required for nodule invasion. Mutations in this gene lead to sensitivity to alkaline conditions which prevents nodule invasion.</text>
</comment>
<comment type="subcellular location">
    <subcellularLocation>
        <location evidence="2">Cell membrane</location>
        <topology evidence="2">Multi-pass membrane protein</topology>
    </subcellularLocation>
</comment>
<comment type="similarity">
    <text evidence="2">To Synechocystis PCC 6803 slr1875.</text>
</comment>
<comment type="caution">
    <text evidence="2">It is uncertain whether Met-1, Met-18 or Met-29 is the initiator.</text>
</comment>
<keyword id="KW-1003">Cell membrane</keyword>
<keyword id="KW-0472">Membrane</keyword>
<keyword id="KW-0536">Nodulation</keyword>
<keyword id="KW-1185">Reference proteome</keyword>
<keyword id="KW-0812">Transmembrane</keyword>
<keyword id="KW-1133">Transmembrane helix</keyword>
<accession>Q52923</accession>
<sequence length="240" mass="26040">MVCQARFGVKNASRGHRMERPQTVKGKIMAVEFGDSQRSLSDTLTGMIASIRGNTITLRELMIEIGEQGFLLLCALLTLPFLIPVSIPGVSTVFGAAIILISLAITLNRMPWLPKRILDREIATEKLVPTLRKGAALVSKLDRYVRPRLNFLTEGALMNRFNGLMIMAGGVLLMFPLGLIPLSNTLPGIAILLLSLGIIQRDGLMVAGGYFFLVATTVYFAVLGYAAFAAGQGLSHFFVS</sequence>
<feature type="chain" id="PRO_0000087123" description="Protein ExoD">
    <location>
        <begin position="1"/>
        <end position="240"/>
    </location>
</feature>
<feature type="transmembrane region" description="Helical" evidence="1">
    <location>
        <begin position="60"/>
        <end position="80"/>
    </location>
</feature>
<feature type="transmembrane region" description="Helical" evidence="1">
    <location>
        <begin position="81"/>
        <end position="101"/>
    </location>
</feature>
<feature type="transmembrane region" description="Helical" evidence="1">
    <location>
        <begin position="203"/>
        <end position="223"/>
    </location>
</feature>
<protein>
    <recommendedName>
        <fullName>Protein ExoD</fullName>
    </recommendedName>
</protein>
<organism>
    <name type="scientific">Rhizobium meliloti (strain 1021)</name>
    <name type="common">Ensifer meliloti</name>
    <name type="synonym">Sinorhizobium meliloti</name>
    <dbReference type="NCBI Taxonomy" id="266834"/>
    <lineage>
        <taxon>Bacteria</taxon>
        <taxon>Pseudomonadati</taxon>
        <taxon>Pseudomonadota</taxon>
        <taxon>Alphaproteobacteria</taxon>
        <taxon>Hyphomicrobiales</taxon>
        <taxon>Rhizobiaceae</taxon>
        <taxon>Sinorhizobium/Ensifer group</taxon>
        <taxon>Sinorhizobium</taxon>
    </lineage>
</organism>
<reference key="1">
    <citation type="journal article" date="1991" name="Genes Dev.">
        <title>Acidic conditions permit effective nodulation of alfalfa by invasion-deficient Rhizobium meliloti exoD mutants.</title>
        <authorList>
            <person name="Reed J.W."/>
            <person name="Walker G.C."/>
        </authorList>
    </citation>
    <scope>NUCLEOTIDE SEQUENCE [GENOMIC DNA]</scope>
    <source>
        <strain>1021</strain>
    </source>
</reference>
<reference key="2">
    <citation type="journal article" date="2001" name="Proc. Natl. Acad. Sci. U.S.A.">
        <title>Analysis of the chromosome sequence of the legume symbiont Sinorhizobium meliloti strain 1021.</title>
        <authorList>
            <person name="Capela D."/>
            <person name="Barloy-Hubler F."/>
            <person name="Gouzy J."/>
            <person name="Bothe G."/>
            <person name="Ampe F."/>
            <person name="Batut J."/>
            <person name="Boistard P."/>
            <person name="Becker A."/>
            <person name="Boutry M."/>
            <person name="Cadieu E."/>
            <person name="Dreano S."/>
            <person name="Gloux S."/>
            <person name="Godrie T."/>
            <person name="Goffeau A."/>
            <person name="Kahn D."/>
            <person name="Kiss E."/>
            <person name="Lelaure V."/>
            <person name="Masuy D."/>
            <person name="Pohl T."/>
            <person name="Portetelle D."/>
            <person name="Puehler A."/>
            <person name="Purnelle B."/>
            <person name="Ramsperger U."/>
            <person name="Renard C."/>
            <person name="Thebault P."/>
            <person name="Vandenbol M."/>
            <person name="Weidner S."/>
            <person name="Galibert F."/>
        </authorList>
    </citation>
    <scope>NUCLEOTIDE SEQUENCE [LARGE SCALE GENOMIC DNA]</scope>
    <source>
        <strain>1021</strain>
    </source>
</reference>
<reference key="3">
    <citation type="journal article" date="2001" name="Science">
        <title>The composite genome of the legume symbiont Sinorhizobium meliloti.</title>
        <authorList>
            <person name="Galibert F."/>
            <person name="Finan T.M."/>
            <person name="Long S.R."/>
            <person name="Puehler A."/>
            <person name="Abola P."/>
            <person name="Ampe F."/>
            <person name="Barloy-Hubler F."/>
            <person name="Barnett M.J."/>
            <person name="Becker A."/>
            <person name="Boistard P."/>
            <person name="Bothe G."/>
            <person name="Boutry M."/>
            <person name="Bowser L."/>
            <person name="Buhrmester J."/>
            <person name="Cadieu E."/>
            <person name="Capela D."/>
            <person name="Chain P."/>
            <person name="Cowie A."/>
            <person name="Davis R.W."/>
            <person name="Dreano S."/>
            <person name="Federspiel N.A."/>
            <person name="Fisher R.F."/>
            <person name="Gloux S."/>
            <person name="Godrie T."/>
            <person name="Goffeau A."/>
            <person name="Golding B."/>
            <person name="Gouzy J."/>
            <person name="Gurjal M."/>
            <person name="Hernandez-Lucas I."/>
            <person name="Hong A."/>
            <person name="Huizar L."/>
            <person name="Hyman R.W."/>
            <person name="Jones T."/>
            <person name="Kahn D."/>
            <person name="Kahn M.L."/>
            <person name="Kalman S."/>
            <person name="Keating D.H."/>
            <person name="Kiss E."/>
            <person name="Komp C."/>
            <person name="Lelaure V."/>
            <person name="Masuy D."/>
            <person name="Palm C."/>
            <person name="Peck M.C."/>
            <person name="Pohl T.M."/>
            <person name="Portetelle D."/>
            <person name="Purnelle B."/>
            <person name="Ramsperger U."/>
            <person name="Surzycki R."/>
            <person name="Thebault P."/>
            <person name="Vandenbol M."/>
            <person name="Vorhoelter F.J."/>
            <person name="Weidner S."/>
            <person name="Wells D.H."/>
            <person name="Wong K."/>
            <person name="Yeh K.-C."/>
            <person name="Batut J."/>
        </authorList>
    </citation>
    <scope>NUCLEOTIDE SEQUENCE [LARGE SCALE GENOMIC DNA]</scope>
    <source>
        <strain>1021</strain>
    </source>
</reference>
<name>EXOD_RHIME</name>
<dbReference type="EMBL" id="M61753">
    <property type="protein sequence ID" value="AAA26259.1"/>
    <property type="molecule type" value="Genomic_DNA"/>
</dbReference>
<dbReference type="EMBL" id="AL591688">
    <property type="protein sequence ID" value="CAC41710.1"/>
    <property type="molecule type" value="Genomic_DNA"/>
</dbReference>
<dbReference type="PIR" id="A39480">
    <property type="entry name" value="A39480"/>
</dbReference>
<dbReference type="RefSeq" id="NP_384379.1">
    <property type="nucleotide sequence ID" value="NC_003047.1"/>
</dbReference>
<dbReference type="EnsemblBacteria" id="CAC41710">
    <property type="protein sequence ID" value="CAC41710"/>
    <property type="gene ID" value="SMc00353"/>
</dbReference>
<dbReference type="KEGG" id="sme:SMc00353"/>
<dbReference type="PATRIC" id="fig|266834.11.peg.1641"/>
<dbReference type="eggNOG" id="COG3932">
    <property type="taxonomic scope" value="Bacteria"/>
</dbReference>
<dbReference type="HOGENOM" id="CLU_093444_0_1_5"/>
<dbReference type="OrthoDB" id="21339at2"/>
<dbReference type="Proteomes" id="UP000001976">
    <property type="component" value="Chromosome"/>
</dbReference>
<dbReference type="GO" id="GO:0005886">
    <property type="term" value="C:plasma membrane"/>
    <property type="evidence" value="ECO:0007669"/>
    <property type="project" value="UniProtKB-SubCell"/>
</dbReference>
<dbReference type="InterPro" id="IPR010331">
    <property type="entry name" value="ExoD"/>
</dbReference>
<dbReference type="PANTHER" id="PTHR41795">
    <property type="entry name" value="EXOPOLYSACCHARIDE SYNTHESIS PROTEIN"/>
    <property type="match status" value="1"/>
</dbReference>
<dbReference type="PANTHER" id="PTHR41795:SF1">
    <property type="entry name" value="EXOPOLYSACCHARIDE SYNTHESIS PROTEIN"/>
    <property type="match status" value="1"/>
</dbReference>
<dbReference type="Pfam" id="PF06055">
    <property type="entry name" value="ExoD"/>
    <property type="match status" value="1"/>
</dbReference>
<dbReference type="PIRSF" id="PIRSF033239">
    <property type="entry name" value="ExoD"/>
    <property type="match status" value="1"/>
</dbReference>